<reference key="1">
    <citation type="journal article" date="2003" name="Lancet">
        <title>Sequencing and analysis of the genome of the Whipple's disease bacterium Tropheryma whipplei.</title>
        <authorList>
            <person name="Bentley S.D."/>
            <person name="Maiwald M."/>
            <person name="Murphy L.D."/>
            <person name="Pallen M.J."/>
            <person name="Yeats C.A."/>
            <person name="Dover L.G."/>
            <person name="Norbertczak H.T."/>
            <person name="Besra G.S."/>
            <person name="Quail M.A."/>
            <person name="Harris D.E."/>
            <person name="von Herbay A."/>
            <person name="Goble A."/>
            <person name="Rutter S."/>
            <person name="Squares R."/>
            <person name="Squares S."/>
            <person name="Barrell B.G."/>
            <person name="Parkhill J."/>
            <person name="Relman D.A."/>
        </authorList>
    </citation>
    <scope>NUCLEOTIDE SEQUENCE [LARGE SCALE GENOMIC DNA]</scope>
    <source>
        <strain>TW08/27</strain>
    </source>
</reference>
<gene>
    <name evidence="1" type="primary">rplY</name>
    <name evidence="1" type="synonym">ctc</name>
    <name type="ordered locus">TW677</name>
</gene>
<protein>
    <recommendedName>
        <fullName evidence="1">Large ribosomal subunit protein bL25</fullName>
    </recommendedName>
    <alternativeName>
        <fullName evidence="2">50S ribosomal protein L25</fullName>
    </alternativeName>
    <alternativeName>
        <fullName evidence="1">General stress protein CTC</fullName>
    </alternativeName>
</protein>
<sequence>MVYPVVEAESRVGFGKGFARRARAAGKIPAVAYGLKRAPEHVLLPAAQMSLIMRRANALLQLKIDARESLVLIKQVQRDRIRNIIEHLDMLFVNEDDAVTIRVPLRFVGQSYAGTVTSVENYSVAVTLQVSQIPEALVVDVSGLQAGRRIFASDIALPDGALLVSPPRLLIAKVDPVRRATQEPPPD</sequence>
<accession>Q83HD6</accession>
<proteinExistence type="inferred from homology"/>
<comment type="function">
    <text evidence="1">This is one of the proteins that binds to the 5S RNA in the ribosome where it forms part of the central protuberance.</text>
</comment>
<comment type="subunit">
    <text evidence="1">Part of the 50S ribosomal subunit; part of the 5S rRNA/L5/L18/L25 subcomplex. Contacts the 5S rRNA. Binds to the 5S rRNA independently of L5 and L18.</text>
</comment>
<comment type="similarity">
    <text evidence="1">Belongs to the bacterial ribosomal protein bL25 family. CTC subfamily.</text>
</comment>
<evidence type="ECO:0000255" key="1">
    <source>
        <dbReference type="HAMAP-Rule" id="MF_01334"/>
    </source>
</evidence>
<evidence type="ECO:0000305" key="2"/>
<keyword id="KW-0687">Ribonucleoprotein</keyword>
<keyword id="KW-0689">Ribosomal protein</keyword>
<keyword id="KW-0694">RNA-binding</keyword>
<keyword id="KW-0699">rRNA-binding</keyword>
<organism>
    <name type="scientific">Tropheryma whipplei (strain TW08/27)</name>
    <name type="common">Whipple's bacillus</name>
    <dbReference type="NCBI Taxonomy" id="218496"/>
    <lineage>
        <taxon>Bacteria</taxon>
        <taxon>Bacillati</taxon>
        <taxon>Actinomycetota</taxon>
        <taxon>Actinomycetes</taxon>
        <taxon>Micrococcales</taxon>
        <taxon>Tropherymataceae</taxon>
        <taxon>Tropheryma</taxon>
    </lineage>
</organism>
<name>RL25_TROW8</name>
<dbReference type="EMBL" id="BX251412">
    <property type="protein sequence ID" value="CAD67336.1"/>
    <property type="molecule type" value="Genomic_DNA"/>
</dbReference>
<dbReference type="RefSeq" id="WP_011096614.1">
    <property type="nucleotide sequence ID" value="NC_004551.1"/>
</dbReference>
<dbReference type="SMR" id="Q83HD6"/>
<dbReference type="GeneID" id="67388453"/>
<dbReference type="KEGG" id="tws:TW677"/>
<dbReference type="HOGENOM" id="CLU_075939_1_0_11"/>
<dbReference type="GO" id="GO:0022625">
    <property type="term" value="C:cytosolic large ribosomal subunit"/>
    <property type="evidence" value="ECO:0007669"/>
    <property type="project" value="TreeGrafter"/>
</dbReference>
<dbReference type="GO" id="GO:0008097">
    <property type="term" value="F:5S rRNA binding"/>
    <property type="evidence" value="ECO:0007669"/>
    <property type="project" value="InterPro"/>
</dbReference>
<dbReference type="GO" id="GO:0003735">
    <property type="term" value="F:structural constituent of ribosome"/>
    <property type="evidence" value="ECO:0007669"/>
    <property type="project" value="InterPro"/>
</dbReference>
<dbReference type="GO" id="GO:0006412">
    <property type="term" value="P:translation"/>
    <property type="evidence" value="ECO:0007669"/>
    <property type="project" value="UniProtKB-UniRule"/>
</dbReference>
<dbReference type="CDD" id="cd00495">
    <property type="entry name" value="Ribosomal_L25_TL5_CTC"/>
    <property type="match status" value="1"/>
</dbReference>
<dbReference type="Gene3D" id="2.170.120.20">
    <property type="entry name" value="Ribosomal protein L25, beta domain"/>
    <property type="match status" value="1"/>
</dbReference>
<dbReference type="Gene3D" id="2.40.240.10">
    <property type="entry name" value="Ribosomal Protein L25, Chain P"/>
    <property type="match status" value="1"/>
</dbReference>
<dbReference type="HAMAP" id="MF_01334">
    <property type="entry name" value="Ribosomal_bL25_CTC"/>
    <property type="match status" value="1"/>
</dbReference>
<dbReference type="InterPro" id="IPR020056">
    <property type="entry name" value="Rbsml_bL25/Gln-tRNA_synth_N"/>
</dbReference>
<dbReference type="InterPro" id="IPR011035">
    <property type="entry name" value="Ribosomal_bL25/Gln-tRNA_synth"/>
</dbReference>
<dbReference type="InterPro" id="IPR020057">
    <property type="entry name" value="Ribosomal_bL25_b-dom"/>
</dbReference>
<dbReference type="InterPro" id="IPR037121">
    <property type="entry name" value="Ribosomal_bL25_C"/>
</dbReference>
<dbReference type="InterPro" id="IPR001021">
    <property type="entry name" value="Ribosomal_bL25_long"/>
</dbReference>
<dbReference type="InterPro" id="IPR029751">
    <property type="entry name" value="Ribosomal_L25_dom"/>
</dbReference>
<dbReference type="InterPro" id="IPR020930">
    <property type="entry name" value="Ribosomal_uL5_bac-type"/>
</dbReference>
<dbReference type="NCBIfam" id="TIGR00731">
    <property type="entry name" value="bL25_bact_ctc"/>
    <property type="match status" value="1"/>
</dbReference>
<dbReference type="NCBIfam" id="NF004131">
    <property type="entry name" value="PRK05618.2-1"/>
    <property type="match status" value="1"/>
</dbReference>
<dbReference type="PANTHER" id="PTHR33284">
    <property type="entry name" value="RIBOSOMAL PROTEIN L25/GLN-TRNA SYNTHETASE, ANTI-CODON-BINDING DOMAIN-CONTAINING PROTEIN"/>
    <property type="match status" value="1"/>
</dbReference>
<dbReference type="PANTHER" id="PTHR33284:SF1">
    <property type="entry name" value="RIBOSOMAL PROTEIN L25_GLN-TRNA SYNTHETASE, ANTI-CODON-BINDING DOMAIN-CONTAINING PROTEIN"/>
    <property type="match status" value="1"/>
</dbReference>
<dbReference type="Pfam" id="PF01386">
    <property type="entry name" value="Ribosomal_L25p"/>
    <property type="match status" value="1"/>
</dbReference>
<dbReference type="Pfam" id="PF14693">
    <property type="entry name" value="Ribosomal_TL5_C"/>
    <property type="match status" value="1"/>
</dbReference>
<dbReference type="SUPFAM" id="SSF50715">
    <property type="entry name" value="Ribosomal protein L25-like"/>
    <property type="match status" value="1"/>
</dbReference>
<feature type="chain" id="PRO_0000181613" description="Large ribosomal subunit protein bL25">
    <location>
        <begin position="1"/>
        <end position="187"/>
    </location>
</feature>